<evidence type="ECO:0000255" key="1"/>
<accession>O31455</accession>
<accession>Q7DL47</accession>
<sequence>MKRMIVRMTLPLLIVCLAFSSFSASARAASEEKYWDHWIERHAQPLDASNASNKDLRFLKKVLKGKRIVQLGETTHGAGEINATKVRMIKYLHEELGYDVLAFESGFPDTNASYLNMDQLTPKSTMKNSIYAVWHTEDVVELFDYMKEQKEKGDPLILTGFDIQSMKNSFNVAATQWVKAVDPEKAELLSQSENDFSTLVTDSNTFDEFSQKKEKLVKNYQKLIKFTKTHASELKENLPKEPKAYEMFMHSLQLRIDVMETYMLEEMKEKLEEYPENIEDFSFFMRDRMMAEQFQWVADTLYPKKKIIVWGHNYHLRKQNTKMIKDWVQLNGPNMGDYLPERLKKQTYTIGIYAYSGASLDSSDNKTVKPVTSPPPSGSLEALLKAADRPAVFVDFLHTKNKKGTSWMYTPRTALYWGYMEEQMILKEQYDGVIWLEHITPSVIIK</sequence>
<reference key="1">
    <citation type="submission" date="1997-07" db="EMBL/GenBank/DDBJ databases">
        <title>Sequence analysis of the 70kb region between 17 and 23 degree of the Bacillus subtilis chromosome.</title>
        <authorList>
            <person name="Haga K."/>
            <person name="Liu H."/>
            <person name="Yasumoto K."/>
            <person name="Takahashi H."/>
            <person name="Yoshikawa H."/>
        </authorList>
    </citation>
    <scope>NUCLEOTIDE SEQUENCE [GENOMIC DNA]</scope>
    <source>
        <strain>168</strain>
    </source>
</reference>
<reference key="2">
    <citation type="journal article" date="1997" name="Nature">
        <title>The complete genome sequence of the Gram-positive bacterium Bacillus subtilis.</title>
        <authorList>
            <person name="Kunst F."/>
            <person name="Ogasawara N."/>
            <person name="Moszer I."/>
            <person name="Albertini A.M."/>
            <person name="Alloni G."/>
            <person name="Azevedo V."/>
            <person name="Bertero M.G."/>
            <person name="Bessieres P."/>
            <person name="Bolotin A."/>
            <person name="Borchert S."/>
            <person name="Borriss R."/>
            <person name="Boursier L."/>
            <person name="Brans A."/>
            <person name="Braun M."/>
            <person name="Brignell S.C."/>
            <person name="Bron S."/>
            <person name="Brouillet S."/>
            <person name="Bruschi C.V."/>
            <person name="Caldwell B."/>
            <person name="Capuano V."/>
            <person name="Carter N.M."/>
            <person name="Choi S.-K."/>
            <person name="Codani J.-J."/>
            <person name="Connerton I.F."/>
            <person name="Cummings N.J."/>
            <person name="Daniel R.A."/>
            <person name="Denizot F."/>
            <person name="Devine K.M."/>
            <person name="Duesterhoeft A."/>
            <person name="Ehrlich S.D."/>
            <person name="Emmerson P.T."/>
            <person name="Entian K.-D."/>
            <person name="Errington J."/>
            <person name="Fabret C."/>
            <person name="Ferrari E."/>
            <person name="Foulger D."/>
            <person name="Fritz C."/>
            <person name="Fujita M."/>
            <person name="Fujita Y."/>
            <person name="Fuma S."/>
            <person name="Galizzi A."/>
            <person name="Galleron N."/>
            <person name="Ghim S.-Y."/>
            <person name="Glaser P."/>
            <person name="Goffeau A."/>
            <person name="Golightly E.J."/>
            <person name="Grandi G."/>
            <person name="Guiseppi G."/>
            <person name="Guy B.J."/>
            <person name="Haga K."/>
            <person name="Haiech J."/>
            <person name="Harwood C.R."/>
            <person name="Henaut A."/>
            <person name="Hilbert H."/>
            <person name="Holsappel S."/>
            <person name="Hosono S."/>
            <person name="Hullo M.-F."/>
            <person name="Itaya M."/>
            <person name="Jones L.-M."/>
            <person name="Joris B."/>
            <person name="Karamata D."/>
            <person name="Kasahara Y."/>
            <person name="Klaerr-Blanchard M."/>
            <person name="Klein C."/>
            <person name="Kobayashi Y."/>
            <person name="Koetter P."/>
            <person name="Koningstein G."/>
            <person name="Krogh S."/>
            <person name="Kumano M."/>
            <person name="Kurita K."/>
            <person name="Lapidus A."/>
            <person name="Lardinois S."/>
            <person name="Lauber J."/>
            <person name="Lazarevic V."/>
            <person name="Lee S.-M."/>
            <person name="Levine A."/>
            <person name="Liu H."/>
            <person name="Masuda S."/>
            <person name="Mauel C."/>
            <person name="Medigue C."/>
            <person name="Medina N."/>
            <person name="Mellado R.P."/>
            <person name="Mizuno M."/>
            <person name="Moestl D."/>
            <person name="Nakai S."/>
            <person name="Noback M."/>
            <person name="Noone D."/>
            <person name="O'Reilly M."/>
            <person name="Ogawa K."/>
            <person name="Ogiwara A."/>
            <person name="Oudega B."/>
            <person name="Park S.-H."/>
            <person name="Parro V."/>
            <person name="Pohl T.M."/>
            <person name="Portetelle D."/>
            <person name="Porwollik S."/>
            <person name="Prescott A.M."/>
            <person name="Presecan E."/>
            <person name="Pujic P."/>
            <person name="Purnelle B."/>
            <person name="Rapoport G."/>
            <person name="Rey M."/>
            <person name="Reynolds S."/>
            <person name="Rieger M."/>
            <person name="Rivolta C."/>
            <person name="Rocha E."/>
            <person name="Roche B."/>
            <person name="Rose M."/>
            <person name="Sadaie Y."/>
            <person name="Sato T."/>
            <person name="Scanlan E."/>
            <person name="Schleich S."/>
            <person name="Schroeter R."/>
            <person name="Scoffone F."/>
            <person name="Sekiguchi J."/>
            <person name="Sekowska A."/>
            <person name="Seror S.J."/>
            <person name="Serror P."/>
            <person name="Shin B.-S."/>
            <person name="Soldo B."/>
            <person name="Sorokin A."/>
            <person name="Tacconi E."/>
            <person name="Takagi T."/>
            <person name="Takahashi H."/>
            <person name="Takemaru K."/>
            <person name="Takeuchi M."/>
            <person name="Tamakoshi A."/>
            <person name="Tanaka T."/>
            <person name="Terpstra P."/>
            <person name="Tognoni A."/>
            <person name="Tosato V."/>
            <person name="Uchiyama S."/>
            <person name="Vandenbol M."/>
            <person name="Vannier F."/>
            <person name="Vassarotti A."/>
            <person name="Viari A."/>
            <person name="Wambutt R."/>
            <person name="Wedler E."/>
            <person name="Wedler H."/>
            <person name="Weitzenegger T."/>
            <person name="Winters P."/>
            <person name="Wipat A."/>
            <person name="Yamamoto H."/>
            <person name="Yamane K."/>
            <person name="Yasumoto K."/>
            <person name="Yata K."/>
            <person name="Yoshida K."/>
            <person name="Yoshikawa H.-F."/>
            <person name="Zumstein E."/>
            <person name="Yoshikawa H."/>
            <person name="Danchin A."/>
        </authorList>
    </citation>
    <scope>NUCLEOTIDE SEQUENCE [LARGE SCALE GENOMIC DNA]</scope>
    <source>
        <strain>168</strain>
    </source>
</reference>
<protein>
    <recommendedName>
        <fullName>Putative hydrolase YbfO</fullName>
        <ecNumber>3.-.-.-</ecNumber>
    </recommendedName>
</protein>
<gene>
    <name type="primary">ybfO</name>
    <name type="ordered locus">BSU02310</name>
</gene>
<name>YBFO_BACSU</name>
<organism>
    <name type="scientific">Bacillus subtilis (strain 168)</name>
    <dbReference type="NCBI Taxonomy" id="224308"/>
    <lineage>
        <taxon>Bacteria</taxon>
        <taxon>Bacillati</taxon>
        <taxon>Bacillota</taxon>
        <taxon>Bacilli</taxon>
        <taxon>Bacillales</taxon>
        <taxon>Bacillaceae</taxon>
        <taxon>Bacillus</taxon>
    </lineage>
</organism>
<feature type="signal peptide" evidence="1">
    <location>
        <begin position="1"/>
        <end position="28"/>
    </location>
</feature>
<feature type="chain" id="PRO_0000389607" description="Putative hydrolase YbfO">
    <location>
        <begin position="29"/>
        <end position="446"/>
    </location>
</feature>
<dbReference type="EC" id="3.-.-.-"/>
<dbReference type="EMBL" id="AB006424">
    <property type="protein sequence ID" value="BAA33128.1"/>
    <property type="molecule type" value="Genomic_DNA"/>
</dbReference>
<dbReference type="EMBL" id="AL009126">
    <property type="protein sequence ID" value="CAB12025.1"/>
    <property type="molecule type" value="Genomic_DNA"/>
</dbReference>
<dbReference type="PIR" id="A69750">
    <property type="entry name" value="A69750"/>
</dbReference>
<dbReference type="RefSeq" id="NP_388113.1">
    <property type="nucleotide sequence ID" value="NC_000964.3"/>
</dbReference>
<dbReference type="RefSeq" id="WP_003246404.1">
    <property type="nucleotide sequence ID" value="NZ_OZ025638.1"/>
</dbReference>
<dbReference type="SMR" id="O31455"/>
<dbReference type="FunCoup" id="O31455">
    <property type="interactions" value="9"/>
</dbReference>
<dbReference type="STRING" id="224308.BSU02310"/>
<dbReference type="PaxDb" id="224308-BSU02310"/>
<dbReference type="DNASU" id="938424"/>
<dbReference type="EnsemblBacteria" id="CAB12025">
    <property type="protein sequence ID" value="CAB12025"/>
    <property type="gene ID" value="BSU_02310"/>
</dbReference>
<dbReference type="GeneID" id="938424"/>
<dbReference type="KEGG" id="bsu:BSU02310"/>
<dbReference type="PATRIC" id="fig|224308.179.peg.237"/>
<dbReference type="eggNOG" id="COG2312">
    <property type="taxonomic scope" value="Bacteria"/>
</dbReference>
<dbReference type="InParanoid" id="O31455"/>
<dbReference type="OrthoDB" id="9810066at2"/>
<dbReference type="BioCyc" id="BSUB:BSU02310-MONOMER"/>
<dbReference type="Proteomes" id="UP000001570">
    <property type="component" value="Chromosome"/>
</dbReference>
<dbReference type="GO" id="GO:0016787">
    <property type="term" value="F:hydrolase activity"/>
    <property type="evidence" value="ECO:0007669"/>
    <property type="project" value="UniProtKB-KW"/>
</dbReference>
<dbReference type="GO" id="GO:0046677">
    <property type="term" value="P:response to antibiotic"/>
    <property type="evidence" value="ECO:0007669"/>
    <property type="project" value="InterPro"/>
</dbReference>
<dbReference type="CDD" id="cd14728">
    <property type="entry name" value="Ere-like"/>
    <property type="match status" value="1"/>
</dbReference>
<dbReference type="Gene3D" id="1.20.1440.30">
    <property type="entry name" value="Biosynthetic Protein domain"/>
    <property type="match status" value="1"/>
</dbReference>
<dbReference type="Gene3D" id="3.40.1660.10">
    <property type="entry name" value="EreA-like (biosynthetic domain)"/>
    <property type="match status" value="1"/>
</dbReference>
<dbReference type="Gene3D" id="3.30.1870.10">
    <property type="entry name" value="EreA-like, domain 2"/>
    <property type="match status" value="1"/>
</dbReference>
<dbReference type="InterPro" id="IPR007815">
    <property type="entry name" value="Emycin_Estase"/>
</dbReference>
<dbReference type="InterPro" id="IPR052036">
    <property type="entry name" value="Hydrolase/PRTase-associated"/>
</dbReference>
<dbReference type="PANTHER" id="PTHR31299">
    <property type="entry name" value="ESTERASE, PUTATIVE (AFU_ORTHOLOGUE AFUA_1G05850)-RELATED"/>
    <property type="match status" value="1"/>
</dbReference>
<dbReference type="PANTHER" id="PTHR31299:SF0">
    <property type="entry name" value="ESTERASE, PUTATIVE (AFU_ORTHOLOGUE AFUA_1G05850)-RELATED"/>
    <property type="match status" value="1"/>
</dbReference>
<dbReference type="Pfam" id="PF05139">
    <property type="entry name" value="Erythro_esteras"/>
    <property type="match status" value="1"/>
</dbReference>
<dbReference type="SUPFAM" id="SSF159501">
    <property type="entry name" value="EreA/ChaN-like"/>
    <property type="match status" value="1"/>
</dbReference>
<proteinExistence type="inferred from homology"/>
<keyword id="KW-0378">Hydrolase</keyword>
<keyword id="KW-1185">Reference proteome</keyword>
<keyword id="KW-0732">Signal</keyword>